<name>RLMD_PSESM</name>
<keyword id="KW-0004">4Fe-4S</keyword>
<keyword id="KW-0408">Iron</keyword>
<keyword id="KW-0411">Iron-sulfur</keyword>
<keyword id="KW-0479">Metal-binding</keyword>
<keyword id="KW-0489">Methyltransferase</keyword>
<keyword id="KW-1185">Reference proteome</keyword>
<keyword id="KW-0698">rRNA processing</keyword>
<keyword id="KW-0949">S-adenosyl-L-methionine</keyword>
<keyword id="KW-0808">Transferase</keyword>
<gene>
    <name evidence="1" type="primary">rlmD</name>
    <name type="synonym">rumA</name>
    <name type="ordered locus">PSPTO_1693</name>
</gene>
<protein>
    <recommendedName>
        <fullName evidence="1">23S rRNA (uracil(1939)-C(5))-methyltransferase RlmD</fullName>
        <ecNumber evidence="1">2.1.1.190</ecNumber>
    </recommendedName>
    <alternativeName>
        <fullName evidence="1">23S rRNA(m5U1939)-methyltransferase</fullName>
    </alternativeName>
</protein>
<reference key="1">
    <citation type="journal article" date="2003" name="Proc. Natl. Acad. Sci. U.S.A.">
        <title>The complete genome sequence of the Arabidopsis and tomato pathogen Pseudomonas syringae pv. tomato DC3000.</title>
        <authorList>
            <person name="Buell C.R."/>
            <person name="Joardar V."/>
            <person name="Lindeberg M."/>
            <person name="Selengut J."/>
            <person name="Paulsen I.T."/>
            <person name="Gwinn M.L."/>
            <person name="Dodson R.J."/>
            <person name="DeBoy R.T."/>
            <person name="Durkin A.S."/>
            <person name="Kolonay J.F."/>
            <person name="Madupu R."/>
            <person name="Daugherty S.C."/>
            <person name="Brinkac L.M."/>
            <person name="Beanan M.J."/>
            <person name="Haft D.H."/>
            <person name="Nelson W.C."/>
            <person name="Davidsen T.M."/>
            <person name="Zafar N."/>
            <person name="Zhou L."/>
            <person name="Liu J."/>
            <person name="Yuan Q."/>
            <person name="Khouri H.M."/>
            <person name="Fedorova N.B."/>
            <person name="Tran B."/>
            <person name="Russell D."/>
            <person name="Berry K.J."/>
            <person name="Utterback T.R."/>
            <person name="Van Aken S.E."/>
            <person name="Feldblyum T.V."/>
            <person name="D'Ascenzo M."/>
            <person name="Deng W.-L."/>
            <person name="Ramos A.R."/>
            <person name="Alfano J.R."/>
            <person name="Cartinhour S."/>
            <person name="Chatterjee A.K."/>
            <person name="Delaney T.P."/>
            <person name="Lazarowitz S.G."/>
            <person name="Martin G.B."/>
            <person name="Schneider D.J."/>
            <person name="Tang X."/>
            <person name="Bender C.L."/>
            <person name="White O."/>
            <person name="Fraser C.M."/>
            <person name="Collmer A."/>
        </authorList>
    </citation>
    <scope>NUCLEOTIDE SEQUENCE [LARGE SCALE GENOMIC DNA]</scope>
    <source>
        <strain>ATCC BAA-871 / DC3000</strain>
    </source>
</reference>
<proteinExistence type="inferred from homology"/>
<accession>Q885Y8</accession>
<sequence length="451" mass="49333">MAKHERGLRFQPTGGVKSVQIPAGKKQRLSIERLSDDGRGIAFLEGKTWFVAGSLAGEEVEARVLNARGKVVEARTERVFVASDLRRAPACDYFGRCGGCSVQHVPHEEQLALKQRMLAEQLLRVANVVPDEWAAPLSGAELAYRRRARVAVRWDAKAKRLDVGFRAAASQDIVSIEECPVLVQALQPIMSQLPAMLKSFSKPQVLGHVELFSGSSTAVLLRHTAPLAEADLATLQAFCKTHGAQLWLHGEGEPQPASPGDTLGYRLEPWNLQLAWRPGDFIQVNAAVNTAMIEQALHWLAPAADERVMDLFCGLGNFALPLASLAKDVVAVEGVATMVERAAVNAMSNDLHNVRFFQADLSQPLTHADWAAEGFSAVLLDPPRDGAFEVVRQIRKTGAQRLLYVSCNPATLARDTVELVKQGYRLKRAGILDMFPQTAHVEAMALFEVSK</sequence>
<evidence type="ECO:0000255" key="1">
    <source>
        <dbReference type="HAMAP-Rule" id="MF_01010"/>
    </source>
</evidence>
<evidence type="ECO:0000256" key="2">
    <source>
        <dbReference type="SAM" id="MobiDB-lite"/>
    </source>
</evidence>
<dbReference type="EC" id="2.1.1.190" evidence="1"/>
<dbReference type="EMBL" id="AE016853">
    <property type="protein sequence ID" value="AAO55213.1"/>
    <property type="molecule type" value="Genomic_DNA"/>
</dbReference>
<dbReference type="RefSeq" id="NP_791518.1">
    <property type="nucleotide sequence ID" value="NC_004578.1"/>
</dbReference>
<dbReference type="RefSeq" id="WP_011103674.1">
    <property type="nucleotide sequence ID" value="NC_004578.1"/>
</dbReference>
<dbReference type="SMR" id="Q885Y8"/>
<dbReference type="STRING" id="223283.PSPTO_1693"/>
<dbReference type="GeneID" id="1183330"/>
<dbReference type="KEGG" id="pst:PSPTO_1693"/>
<dbReference type="PATRIC" id="fig|223283.9.peg.1719"/>
<dbReference type="eggNOG" id="COG2265">
    <property type="taxonomic scope" value="Bacteria"/>
</dbReference>
<dbReference type="HOGENOM" id="CLU_014689_8_2_6"/>
<dbReference type="OrthoDB" id="9804590at2"/>
<dbReference type="PhylomeDB" id="Q885Y8"/>
<dbReference type="Proteomes" id="UP000002515">
    <property type="component" value="Chromosome"/>
</dbReference>
<dbReference type="GO" id="GO:0051539">
    <property type="term" value="F:4 iron, 4 sulfur cluster binding"/>
    <property type="evidence" value="ECO:0007669"/>
    <property type="project" value="UniProtKB-KW"/>
</dbReference>
<dbReference type="GO" id="GO:0005506">
    <property type="term" value="F:iron ion binding"/>
    <property type="evidence" value="ECO:0007669"/>
    <property type="project" value="UniProtKB-UniRule"/>
</dbReference>
<dbReference type="GO" id="GO:0003723">
    <property type="term" value="F:RNA binding"/>
    <property type="evidence" value="ECO:0007669"/>
    <property type="project" value="InterPro"/>
</dbReference>
<dbReference type="GO" id="GO:0070041">
    <property type="term" value="F:rRNA (uridine-C5-)-methyltransferase activity"/>
    <property type="evidence" value="ECO:0007669"/>
    <property type="project" value="UniProtKB-UniRule"/>
</dbReference>
<dbReference type="GO" id="GO:0070475">
    <property type="term" value="P:rRNA base methylation"/>
    <property type="evidence" value="ECO:0007669"/>
    <property type="project" value="TreeGrafter"/>
</dbReference>
<dbReference type="CDD" id="cd02440">
    <property type="entry name" value="AdoMet_MTases"/>
    <property type="match status" value="1"/>
</dbReference>
<dbReference type="FunFam" id="3.40.50.150:FF:000009">
    <property type="entry name" value="23S rRNA (Uracil(1939)-C(5))-methyltransferase RlmD"/>
    <property type="match status" value="1"/>
</dbReference>
<dbReference type="Gene3D" id="2.40.50.1070">
    <property type="match status" value="1"/>
</dbReference>
<dbReference type="Gene3D" id="2.40.50.140">
    <property type="entry name" value="Nucleic acid-binding proteins"/>
    <property type="match status" value="1"/>
</dbReference>
<dbReference type="Gene3D" id="3.40.50.150">
    <property type="entry name" value="Vaccinia Virus protein VP39"/>
    <property type="match status" value="1"/>
</dbReference>
<dbReference type="HAMAP" id="MF_01010">
    <property type="entry name" value="23SrRNA_methyltr_RlmD"/>
    <property type="match status" value="1"/>
</dbReference>
<dbReference type="InterPro" id="IPR001566">
    <property type="entry name" value="23S_rRNA_MeTrfase_RlmD"/>
</dbReference>
<dbReference type="InterPro" id="IPR030390">
    <property type="entry name" value="MeTrfase_TrmA_AS"/>
</dbReference>
<dbReference type="InterPro" id="IPR030391">
    <property type="entry name" value="MeTrfase_TrmA_CS"/>
</dbReference>
<dbReference type="InterPro" id="IPR012340">
    <property type="entry name" value="NA-bd_OB-fold"/>
</dbReference>
<dbReference type="InterPro" id="IPR029063">
    <property type="entry name" value="SAM-dependent_MTases_sf"/>
</dbReference>
<dbReference type="InterPro" id="IPR002792">
    <property type="entry name" value="TRAM_dom"/>
</dbReference>
<dbReference type="InterPro" id="IPR010280">
    <property type="entry name" value="U5_MeTrfase_fam"/>
</dbReference>
<dbReference type="NCBIfam" id="NF009639">
    <property type="entry name" value="PRK13168.1"/>
    <property type="match status" value="1"/>
</dbReference>
<dbReference type="NCBIfam" id="TIGR00479">
    <property type="entry name" value="rumA"/>
    <property type="match status" value="1"/>
</dbReference>
<dbReference type="PANTHER" id="PTHR11061:SF49">
    <property type="entry name" value="23S RRNA (URACIL(1939)-C(5))-METHYLTRANSFERASE RLMD"/>
    <property type="match status" value="1"/>
</dbReference>
<dbReference type="PANTHER" id="PTHR11061">
    <property type="entry name" value="RNA M5U METHYLTRANSFERASE"/>
    <property type="match status" value="1"/>
</dbReference>
<dbReference type="Pfam" id="PF01938">
    <property type="entry name" value="TRAM"/>
    <property type="match status" value="1"/>
</dbReference>
<dbReference type="Pfam" id="PF05958">
    <property type="entry name" value="tRNA_U5-meth_tr"/>
    <property type="match status" value="1"/>
</dbReference>
<dbReference type="SUPFAM" id="SSF50249">
    <property type="entry name" value="Nucleic acid-binding proteins"/>
    <property type="match status" value="1"/>
</dbReference>
<dbReference type="SUPFAM" id="SSF53335">
    <property type="entry name" value="S-adenosyl-L-methionine-dependent methyltransferases"/>
    <property type="match status" value="1"/>
</dbReference>
<dbReference type="PROSITE" id="PS51687">
    <property type="entry name" value="SAM_MT_RNA_M5U"/>
    <property type="match status" value="1"/>
</dbReference>
<dbReference type="PROSITE" id="PS50926">
    <property type="entry name" value="TRAM"/>
    <property type="match status" value="1"/>
</dbReference>
<dbReference type="PROSITE" id="PS01230">
    <property type="entry name" value="TRMA_1"/>
    <property type="match status" value="1"/>
</dbReference>
<dbReference type="PROSITE" id="PS01231">
    <property type="entry name" value="TRMA_2"/>
    <property type="match status" value="1"/>
</dbReference>
<feature type="chain" id="PRO_0000161909" description="23S rRNA (uracil(1939)-C(5))-methyltransferase RlmD">
    <location>
        <begin position="1"/>
        <end position="451"/>
    </location>
</feature>
<feature type="domain" description="TRAM" evidence="1">
    <location>
        <begin position="20"/>
        <end position="78"/>
    </location>
</feature>
<feature type="region of interest" description="Disordered" evidence="2">
    <location>
        <begin position="1"/>
        <end position="21"/>
    </location>
</feature>
<feature type="active site" description="Nucleophile" evidence="1">
    <location>
        <position position="407"/>
    </location>
</feature>
<feature type="binding site" evidence="1">
    <location>
        <position position="91"/>
    </location>
    <ligand>
        <name>[4Fe-4S] cluster</name>
        <dbReference type="ChEBI" id="CHEBI:49883"/>
    </ligand>
</feature>
<feature type="binding site" evidence="1">
    <location>
        <position position="97"/>
    </location>
    <ligand>
        <name>[4Fe-4S] cluster</name>
        <dbReference type="ChEBI" id="CHEBI:49883"/>
    </ligand>
</feature>
<feature type="binding site" evidence="1">
    <location>
        <position position="100"/>
    </location>
    <ligand>
        <name>[4Fe-4S] cluster</name>
        <dbReference type="ChEBI" id="CHEBI:49883"/>
    </ligand>
</feature>
<feature type="binding site" evidence="1">
    <location>
        <position position="179"/>
    </location>
    <ligand>
        <name>[4Fe-4S] cluster</name>
        <dbReference type="ChEBI" id="CHEBI:49883"/>
    </ligand>
</feature>
<feature type="binding site" evidence="1">
    <location>
        <position position="283"/>
    </location>
    <ligand>
        <name>S-adenosyl-L-methionine</name>
        <dbReference type="ChEBI" id="CHEBI:59789"/>
    </ligand>
</feature>
<feature type="binding site" evidence="1">
    <location>
        <position position="312"/>
    </location>
    <ligand>
        <name>S-adenosyl-L-methionine</name>
        <dbReference type="ChEBI" id="CHEBI:59789"/>
    </ligand>
</feature>
<feature type="binding site" evidence="1">
    <location>
        <position position="317"/>
    </location>
    <ligand>
        <name>S-adenosyl-L-methionine</name>
        <dbReference type="ChEBI" id="CHEBI:59789"/>
    </ligand>
</feature>
<feature type="binding site" evidence="1">
    <location>
        <position position="333"/>
    </location>
    <ligand>
        <name>S-adenosyl-L-methionine</name>
        <dbReference type="ChEBI" id="CHEBI:59789"/>
    </ligand>
</feature>
<feature type="binding site" evidence="1">
    <location>
        <position position="360"/>
    </location>
    <ligand>
        <name>S-adenosyl-L-methionine</name>
        <dbReference type="ChEBI" id="CHEBI:59789"/>
    </ligand>
</feature>
<feature type="binding site" evidence="1">
    <location>
        <position position="381"/>
    </location>
    <ligand>
        <name>S-adenosyl-L-methionine</name>
        <dbReference type="ChEBI" id="CHEBI:59789"/>
    </ligand>
</feature>
<comment type="function">
    <text evidence="1">Catalyzes the formation of 5-methyl-uridine at position 1939 (m5U1939) in 23S rRNA.</text>
</comment>
<comment type="catalytic activity">
    <reaction evidence="1">
        <text>uridine(1939) in 23S rRNA + S-adenosyl-L-methionine = 5-methyluridine(1939) in 23S rRNA + S-adenosyl-L-homocysteine + H(+)</text>
        <dbReference type="Rhea" id="RHEA:42908"/>
        <dbReference type="Rhea" id="RHEA-COMP:10278"/>
        <dbReference type="Rhea" id="RHEA-COMP:10279"/>
        <dbReference type="ChEBI" id="CHEBI:15378"/>
        <dbReference type="ChEBI" id="CHEBI:57856"/>
        <dbReference type="ChEBI" id="CHEBI:59789"/>
        <dbReference type="ChEBI" id="CHEBI:65315"/>
        <dbReference type="ChEBI" id="CHEBI:74447"/>
        <dbReference type="EC" id="2.1.1.190"/>
    </reaction>
</comment>
<comment type="similarity">
    <text evidence="1">Belongs to the class I-like SAM-binding methyltransferase superfamily. RNA M5U methyltransferase family. RlmD subfamily.</text>
</comment>
<organism>
    <name type="scientific">Pseudomonas syringae pv. tomato (strain ATCC BAA-871 / DC3000)</name>
    <dbReference type="NCBI Taxonomy" id="223283"/>
    <lineage>
        <taxon>Bacteria</taxon>
        <taxon>Pseudomonadati</taxon>
        <taxon>Pseudomonadota</taxon>
        <taxon>Gammaproteobacteria</taxon>
        <taxon>Pseudomonadales</taxon>
        <taxon>Pseudomonadaceae</taxon>
        <taxon>Pseudomonas</taxon>
    </lineage>
</organism>